<organism>
    <name type="scientific">Bartonella quintana (strain Toulouse)</name>
    <name type="common">Rochalimaea quintana</name>
    <dbReference type="NCBI Taxonomy" id="283165"/>
    <lineage>
        <taxon>Bacteria</taxon>
        <taxon>Pseudomonadati</taxon>
        <taxon>Pseudomonadota</taxon>
        <taxon>Alphaproteobacteria</taxon>
        <taxon>Hyphomicrobiales</taxon>
        <taxon>Bartonellaceae</taxon>
        <taxon>Bartonella</taxon>
    </lineage>
</organism>
<name>PROA_BARQU</name>
<accession>Q6G0S6</accession>
<comment type="function">
    <text evidence="1">Catalyzes the NADPH-dependent reduction of L-glutamate 5-phosphate into L-glutamate 5-semialdehyde and phosphate. The product spontaneously undergoes cyclization to form 1-pyrroline-5-carboxylate.</text>
</comment>
<comment type="catalytic activity">
    <reaction evidence="1">
        <text>L-glutamate 5-semialdehyde + phosphate + NADP(+) = L-glutamyl 5-phosphate + NADPH + H(+)</text>
        <dbReference type="Rhea" id="RHEA:19541"/>
        <dbReference type="ChEBI" id="CHEBI:15378"/>
        <dbReference type="ChEBI" id="CHEBI:43474"/>
        <dbReference type="ChEBI" id="CHEBI:57783"/>
        <dbReference type="ChEBI" id="CHEBI:58066"/>
        <dbReference type="ChEBI" id="CHEBI:58274"/>
        <dbReference type="ChEBI" id="CHEBI:58349"/>
        <dbReference type="EC" id="1.2.1.41"/>
    </reaction>
</comment>
<comment type="pathway">
    <text evidence="1">Amino-acid biosynthesis; L-proline biosynthesis; L-glutamate 5-semialdehyde from L-glutamate: step 2/2.</text>
</comment>
<comment type="subcellular location">
    <subcellularLocation>
        <location evidence="1">Cytoplasm</location>
    </subcellularLocation>
</comment>
<comment type="similarity">
    <text evidence="1">Belongs to the gamma-glutamyl phosphate reductase family.</text>
</comment>
<evidence type="ECO:0000255" key="1">
    <source>
        <dbReference type="HAMAP-Rule" id="MF_00412"/>
    </source>
</evidence>
<feature type="chain" id="PRO_0000189699" description="Gamma-glutamyl phosphate reductase">
    <location>
        <begin position="1"/>
        <end position="412"/>
    </location>
</feature>
<sequence length="412" mass="44633">MKDMGQKARHAAALLAVMSSEQKNKALEMIALSLEAQSAEILQANHQDLVNAAQNNLNVAMVDRLKLDKVRLCTIIDSVRQVACLPDPVGQVMSEWTRPNGLHIRRVRTPLGVIGIIYESRPSVTIDASILCLKSGNAAILRGGSDSFHSAHALHSALVKGLKEAGLPQDAIQMVGTKDRDVVGEMLKGLDGAIDVIVPRGGKDLVARVQSDARVPIFAHLEGLCHIYIDQSADLDMARNIVLNAKLRRTGICGAVETVLIDRQALKKFLPVLTALQEKGCEIRATEDIVFLLPDVKLASEEDWSQEYLDAILSVKTVEGIEGAIAHIRRYSSGHTESIIAEDMKVVKIFFNCLDSAILLHNASTQFADGGEFGFGAEIGIATGKMHARGPVGVEQLTSFQYHVKGNGQVRS</sequence>
<gene>
    <name evidence="1" type="primary">proA</name>
    <name type="ordered locus">BQ01480</name>
</gene>
<reference key="1">
    <citation type="journal article" date="2004" name="Proc. Natl. Acad. Sci. U.S.A.">
        <title>The louse-borne human pathogen Bartonella quintana is a genomic derivative of the zoonotic agent Bartonella henselae.</title>
        <authorList>
            <person name="Alsmark U.C.M."/>
            <person name="Frank A.C."/>
            <person name="Karlberg E.O."/>
            <person name="Legault B.-A."/>
            <person name="Ardell D.H."/>
            <person name="Canbaeck B."/>
            <person name="Eriksson A.-S."/>
            <person name="Naeslund A.K."/>
            <person name="Handley S.A."/>
            <person name="Huvet M."/>
            <person name="La Scola B."/>
            <person name="Holmberg M."/>
            <person name="Andersson S.G.E."/>
        </authorList>
    </citation>
    <scope>NUCLEOTIDE SEQUENCE [LARGE SCALE GENOMIC DNA]</scope>
    <source>
        <strain>Toulouse</strain>
    </source>
</reference>
<protein>
    <recommendedName>
        <fullName evidence="1">Gamma-glutamyl phosphate reductase</fullName>
        <shortName evidence="1">GPR</shortName>
        <ecNumber evidence="1">1.2.1.41</ecNumber>
    </recommendedName>
    <alternativeName>
        <fullName evidence="1">Glutamate-5-semialdehyde dehydrogenase</fullName>
    </alternativeName>
    <alternativeName>
        <fullName evidence="1">Glutamyl-gamma-semialdehyde dehydrogenase</fullName>
        <shortName evidence="1">GSA dehydrogenase</shortName>
    </alternativeName>
</protein>
<keyword id="KW-0028">Amino-acid biosynthesis</keyword>
<keyword id="KW-0963">Cytoplasm</keyword>
<keyword id="KW-0521">NADP</keyword>
<keyword id="KW-0560">Oxidoreductase</keyword>
<keyword id="KW-0641">Proline biosynthesis</keyword>
<proteinExistence type="inferred from homology"/>
<dbReference type="EC" id="1.2.1.41" evidence="1"/>
<dbReference type="EMBL" id="BX897700">
    <property type="protein sequence ID" value="CAF25651.1"/>
    <property type="molecule type" value="Genomic_DNA"/>
</dbReference>
<dbReference type="SMR" id="Q6G0S6"/>
<dbReference type="KEGG" id="bqu:BQ01480"/>
<dbReference type="eggNOG" id="COG0014">
    <property type="taxonomic scope" value="Bacteria"/>
</dbReference>
<dbReference type="HOGENOM" id="CLU_030231_0_0_5"/>
<dbReference type="UniPathway" id="UPA00098">
    <property type="reaction ID" value="UER00360"/>
</dbReference>
<dbReference type="Proteomes" id="UP000000597">
    <property type="component" value="Chromosome"/>
</dbReference>
<dbReference type="GO" id="GO:0005737">
    <property type="term" value="C:cytoplasm"/>
    <property type="evidence" value="ECO:0007669"/>
    <property type="project" value="UniProtKB-SubCell"/>
</dbReference>
<dbReference type="GO" id="GO:0004350">
    <property type="term" value="F:glutamate-5-semialdehyde dehydrogenase activity"/>
    <property type="evidence" value="ECO:0007669"/>
    <property type="project" value="UniProtKB-UniRule"/>
</dbReference>
<dbReference type="GO" id="GO:0050661">
    <property type="term" value="F:NADP binding"/>
    <property type="evidence" value="ECO:0007669"/>
    <property type="project" value="InterPro"/>
</dbReference>
<dbReference type="GO" id="GO:0055129">
    <property type="term" value="P:L-proline biosynthetic process"/>
    <property type="evidence" value="ECO:0007669"/>
    <property type="project" value="UniProtKB-UniRule"/>
</dbReference>
<dbReference type="CDD" id="cd07079">
    <property type="entry name" value="ALDH_F18-19_ProA-GPR"/>
    <property type="match status" value="1"/>
</dbReference>
<dbReference type="Gene3D" id="3.40.605.10">
    <property type="entry name" value="Aldehyde Dehydrogenase, Chain A, domain 1"/>
    <property type="match status" value="1"/>
</dbReference>
<dbReference type="Gene3D" id="3.40.309.10">
    <property type="entry name" value="Aldehyde Dehydrogenase, Chain A, domain 2"/>
    <property type="match status" value="1"/>
</dbReference>
<dbReference type="HAMAP" id="MF_00412">
    <property type="entry name" value="ProA"/>
    <property type="match status" value="1"/>
</dbReference>
<dbReference type="InterPro" id="IPR016161">
    <property type="entry name" value="Ald_DH/histidinol_DH"/>
</dbReference>
<dbReference type="InterPro" id="IPR016163">
    <property type="entry name" value="Ald_DH_C"/>
</dbReference>
<dbReference type="InterPro" id="IPR016162">
    <property type="entry name" value="Ald_DH_N"/>
</dbReference>
<dbReference type="InterPro" id="IPR015590">
    <property type="entry name" value="Aldehyde_DH_dom"/>
</dbReference>
<dbReference type="InterPro" id="IPR020593">
    <property type="entry name" value="G-glutamylP_reductase_CS"/>
</dbReference>
<dbReference type="InterPro" id="IPR012134">
    <property type="entry name" value="Glu-5-SA_DH"/>
</dbReference>
<dbReference type="InterPro" id="IPR000965">
    <property type="entry name" value="GPR_dom"/>
</dbReference>
<dbReference type="NCBIfam" id="NF001221">
    <property type="entry name" value="PRK00197.1"/>
    <property type="match status" value="1"/>
</dbReference>
<dbReference type="NCBIfam" id="TIGR00407">
    <property type="entry name" value="proA"/>
    <property type="match status" value="1"/>
</dbReference>
<dbReference type="PANTHER" id="PTHR11063:SF8">
    <property type="entry name" value="DELTA-1-PYRROLINE-5-CARBOXYLATE SYNTHASE"/>
    <property type="match status" value="1"/>
</dbReference>
<dbReference type="PANTHER" id="PTHR11063">
    <property type="entry name" value="GLUTAMATE SEMIALDEHYDE DEHYDROGENASE"/>
    <property type="match status" value="1"/>
</dbReference>
<dbReference type="Pfam" id="PF00171">
    <property type="entry name" value="Aldedh"/>
    <property type="match status" value="1"/>
</dbReference>
<dbReference type="PIRSF" id="PIRSF000151">
    <property type="entry name" value="GPR"/>
    <property type="match status" value="1"/>
</dbReference>
<dbReference type="SUPFAM" id="SSF53720">
    <property type="entry name" value="ALDH-like"/>
    <property type="match status" value="1"/>
</dbReference>
<dbReference type="PROSITE" id="PS01223">
    <property type="entry name" value="PROA"/>
    <property type="match status" value="1"/>
</dbReference>